<feature type="chain" id="PRO_0000144145" description="Probable biotin transporter BioY">
    <location>
        <begin position="1"/>
        <end position="196"/>
    </location>
</feature>
<feature type="transmembrane region" description="Helical" evidence="2">
    <location>
        <begin position="8"/>
        <end position="28"/>
    </location>
</feature>
<feature type="transmembrane region" description="Helical" evidence="2">
    <location>
        <begin position="30"/>
        <end position="50"/>
    </location>
</feature>
<feature type="transmembrane region" description="Helical" evidence="2">
    <location>
        <begin position="59"/>
        <end position="79"/>
    </location>
</feature>
<feature type="transmembrane region" description="Helical" evidence="2">
    <location>
        <begin position="81"/>
        <end position="101"/>
    </location>
</feature>
<feature type="transmembrane region" description="Helical" evidence="2">
    <location>
        <begin position="114"/>
        <end position="134"/>
    </location>
</feature>
<feature type="transmembrane region" description="Helical" evidence="2">
    <location>
        <begin position="150"/>
        <end position="170"/>
    </location>
</feature>
<proteinExistence type="inferred from homology"/>
<comment type="function">
    <text evidence="1">Probable biotin transporter.</text>
</comment>
<comment type="subcellular location">
    <subcellularLocation>
        <location evidence="3">Cell membrane</location>
        <topology evidence="3">Multi-pass membrane protein</topology>
    </subcellularLocation>
</comment>
<comment type="similarity">
    <text evidence="3">Belongs to the BioY family.</text>
</comment>
<organism>
    <name type="scientific">Lysinibacillus sphaericus</name>
    <name type="common">Bacillus sphaericus</name>
    <dbReference type="NCBI Taxonomy" id="1421"/>
    <lineage>
        <taxon>Bacteria</taxon>
        <taxon>Bacillati</taxon>
        <taxon>Bacillota</taxon>
        <taxon>Bacilli</taxon>
        <taxon>Bacillales</taxon>
        <taxon>Bacillaceae</taxon>
        <taxon>Lysinibacillus</taxon>
    </lineage>
</organism>
<sequence>MLKQQSTLSLVMIAMFAALTAVGAFIKIPLPLVPFTLQIVFVFLAGCLLGGRNGFQSQLVYIGIGLVGLPVFTQGGGITYVLQPTFGYLIGFALAALVIGYMIDRVESPTKKHFIVANIIGLIIIYAVAVPYLYVALNVWLNMKSSWSHVFLVGFVNSIVADFCLAIASALLAERLYKVFRSARAIKLVQIEKENV</sequence>
<evidence type="ECO:0000250" key="1"/>
<evidence type="ECO:0000255" key="2"/>
<evidence type="ECO:0000305" key="3"/>
<keyword id="KW-1003">Cell membrane</keyword>
<keyword id="KW-0472">Membrane</keyword>
<keyword id="KW-0812">Transmembrane</keyword>
<keyword id="KW-1133">Transmembrane helix</keyword>
<keyword id="KW-0813">Transport</keyword>
<dbReference type="EMBL" id="M29292">
    <property type="protein sequence ID" value="AAB02326.1"/>
    <property type="molecule type" value="Genomic_DNA"/>
</dbReference>
<dbReference type="EMBL" id="M27867">
    <property type="protein sequence ID" value="AAA22267.1"/>
    <property type="molecule type" value="Genomic_DNA"/>
</dbReference>
<dbReference type="PIR" id="JQ0508">
    <property type="entry name" value="JQ0508"/>
</dbReference>
<dbReference type="RefSeq" id="WP_024361130.1">
    <property type="nucleotide sequence ID" value="NZ_UFSZ01000001.1"/>
</dbReference>
<dbReference type="SMR" id="P22819"/>
<dbReference type="STRING" id="1421.A2J09_09955"/>
<dbReference type="GO" id="GO:0005886">
    <property type="term" value="C:plasma membrane"/>
    <property type="evidence" value="ECO:0007669"/>
    <property type="project" value="UniProtKB-SubCell"/>
</dbReference>
<dbReference type="GO" id="GO:0015225">
    <property type="term" value="F:biotin transmembrane transporter activity"/>
    <property type="evidence" value="ECO:0007669"/>
    <property type="project" value="InterPro"/>
</dbReference>
<dbReference type="Gene3D" id="1.10.1760.20">
    <property type="match status" value="1"/>
</dbReference>
<dbReference type="InterPro" id="IPR003784">
    <property type="entry name" value="BioY"/>
</dbReference>
<dbReference type="PANTHER" id="PTHR34295">
    <property type="entry name" value="BIOTIN TRANSPORTER BIOY"/>
    <property type="match status" value="1"/>
</dbReference>
<dbReference type="PANTHER" id="PTHR34295:SF1">
    <property type="entry name" value="BIOTIN TRANSPORTER BIOY"/>
    <property type="match status" value="1"/>
</dbReference>
<dbReference type="Pfam" id="PF02632">
    <property type="entry name" value="BioY"/>
    <property type="match status" value="1"/>
</dbReference>
<dbReference type="PIRSF" id="PIRSF016661">
    <property type="entry name" value="BioY"/>
    <property type="match status" value="1"/>
</dbReference>
<reference key="1">
    <citation type="journal article" date="1990" name="Gene">
        <title>Cloning and characterization of the Bacillus sphaericus genes controlling the bioconversion of pimelate into dethiobiotin.</title>
        <authorList>
            <person name="Gloeckler R."/>
            <person name="Ohsawa I."/>
            <person name="Speck D."/>
            <person name="Ledoux C."/>
            <person name="Bernard S."/>
            <person name="Zinsius M."/>
            <person name="Villeval D."/>
            <person name="Kisou T."/>
            <person name="Kamogawa K."/>
            <person name="Lemoine Y."/>
        </authorList>
    </citation>
    <scope>NUCLEOTIDE SEQUENCE [GENOMIC DNA]</scope>
    <source>
        <strain>ATCC 10208 / DSM 5019 / NBRC 3525 / NCIMB 11935 / NRS 966 / 1911</strain>
    </source>
</reference>
<reference key="2">
    <citation type="journal article" date="1989" name="Gene">
        <title>Cloning of the biotin synthetase gene from Bacillus sphaericus and expression in Escherichia coli and Bacilli.</title>
        <authorList>
            <person name="Ohsawa I."/>
            <person name="Speck D."/>
            <person name="Kisou T."/>
            <person name="Hayakawa K."/>
            <person name="Zinsius M."/>
            <person name="Gloeckler R."/>
            <person name="Lemoine Y."/>
            <person name="Kamogawa K."/>
        </authorList>
    </citation>
    <scope>NUCLEOTIDE SEQUENCE [GENOMIC DNA] OF 104-196</scope>
    <source>
        <strain>T-178-367</strain>
    </source>
</reference>
<protein>
    <recommendedName>
        <fullName>Probable biotin transporter BioY</fullName>
    </recommendedName>
</protein>
<name>BIOY_LYSSH</name>
<gene>
    <name type="primary">bioY</name>
</gene>
<accession>P22819</accession>
<accession>P19207</accession>